<gene>
    <name evidence="1" type="primary">trpC</name>
    <name type="ordered locus">LMOf2365_1652</name>
</gene>
<proteinExistence type="inferred from homology"/>
<comment type="catalytic activity">
    <reaction evidence="1">
        <text>1-(2-carboxyphenylamino)-1-deoxy-D-ribulose 5-phosphate + H(+) = (1S,2R)-1-C-(indol-3-yl)glycerol 3-phosphate + CO2 + H2O</text>
        <dbReference type="Rhea" id="RHEA:23476"/>
        <dbReference type="ChEBI" id="CHEBI:15377"/>
        <dbReference type="ChEBI" id="CHEBI:15378"/>
        <dbReference type="ChEBI" id="CHEBI:16526"/>
        <dbReference type="ChEBI" id="CHEBI:58613"/>
        <dbReference type="ChEBI" id="CHEBI:58866"/>
        <dbReference type="EC" id="4.1.1.48"/>
    </reaction>
</comment>
<comment type="pathway">
    <text evidence="1">Amino-acid biosynthesis; L-tryptophan biosynthesis; L-tryptophan from chorismate: step 4/5.</text>
</comment>
<comment type="similarity">
    <text evidence="1">Belongs to the TrpC family.</text>
</comment>
<feature type="chain" id="PRO_0000154231" description="Indole-3-glycerol phosphate synthase">
    <location>
        <begin position="1"/>
        <end position="252"/>
    </location>
</feature>
<protein>
    <recommendedName>
        <fullName evidence="1">Indole-3-glycerol phosphate synthase</fullName>
        <shortName evidence="1">IGPS</shortName>
        <ecNumber evidence="1">4.1.1.48</ecNumber>
    </recommendedName>
</protein>
<name>TRPC_LISMF</name>
<accession>Q71Z38</accession>
<sequence>MTFLEEILAQKAVEVADMPLEKVAEKRKTYSFYEFLKANTSTMQLIAEVKRASPSKGEINMGVNPVLQAKSYQAAGAGMISVLTDPVFFKGSIEDLREVAKNVEIPVLCKDFIISEKQLIRARNAGATVVLLIISALTEEMLIALFEQALALDLEVLVEVHDQKELAVAQKIGAKLIGVNNRNLHTFEVDIAVSERLASDFSSDACFISESGFRTAEDVARVSQKYNAVLVGEALMREATPEAAAKSLKVTR</sequence>
<keyword id="KW-0028">Amino-acid biosynthesis</keyword>
<keyword id="KW-0057">Aromatic amino acid biosynthesis</keyword>
<keyword id="KW-0210">Decarboxylase</keyword>
<keyword id="KW-0456">Lyase</keyword>
<keyword id="KW-0822">Tryptophan biosynthesis</keyword>
<dbReference type="EC" id="4.1.1.48" evidence="1"/>
<dbReference type="EMBL" id="AE017262">
    <property type="protein sequence ID" value="AAT04426.1"/>
    <property type="molecule type" value="Genomic_DNA"/>
</dbReference>
<dbReference type="RefSeq" id="WP_010958923.1">
    <property type="nucleotide sequence ID" value="NC_002973.6"/>
</dbReference>
<dbReference type="SMR" id="Q71Z38"/>
<dbReference type="KEGG" id="lmf:LMOf2365_1652"/>
<dbReference type="HOGENOM" id="CLU_034247_2_1_9"/>
<dbReference type="UniPathway" id="UPA00035">
    <property type="reaction ID" value="UER00043"/>
</dbReference>
<dbReference type="GO" id="GO:0004425">
    <property type="term" value="F:indole-3-glycerol-phosphate synthase activity"/>
    <property type="evidence" value="ECO:0007669"/>
    <property type="project" value="UniProtKB-UniRule"/>
</dbReference>
<dbReference type="GO" id="GO:0004640">
    <property type="term" value="F:phosphoribosylanthranilate isomerase activity"/>
    <property type="evidence" value="ECO:0007669"/>
    <property type="project" value="TreeGrafter"/>
</dbReference>
<dbReference type="GO" id="GO:0000162">
    <property type="term" value="P:L-tryptophan biosynthetic process"/>
    <property type="evidence" value="ECO:0007669"/>
    <property type="project" value="UniProtKB-UniRule"/>
</dbReference>
<dbReference type="CDD" id="cd00331">
    <property type="entry name" value="IGPS"/>
    <property type="match status" value="1"/>
</dbReference>
<dbReference type="FunFam" id="3.20.20.70:FF:000024">
    <property type="entry name" value="Indole-3-glycerol phosphate synthase"/>
    <property type="match status" value="1"/>
</dbReference>
<dbReference type="Gene3D" id="3.20.20.70">
    <property type="entry name" value="Aldolase class I"/>
    <property type="match status" value="1"/>
</dbReference>
<dbReference type="HAMAP" id="MF_00134_B">
    <property type="entry name" value="IGPS_B"/>
    <property type="match status" value="1"/>
</dbReference>
<dbReference type="InterPro" id="IPR013785">
    <property type="entry name" value="Aldolase_TIM"/>
</dbReference>
<dbReference type="InterPro" id="IPR045186">
    <property type="entry name" value="Indole-3-glycerol_P_synth"/>
</dbReference>
<dbReference type="InterPro" id="IPR013798">
    <property type="entry name" value="Indole-3-glycerol_P_synth_dom"/>
</dbReference>
<dbReference type="InterPro" id="IPR001468">
    <property type="entry name" value="Indole-3-GlycerolPSynthase_CS"/>
</dbReference>
<dbReference type="InterPro" id="IPR011060">
    <property type="entry name" value="RibuloseP-bd_barrel"/>
</dbReference>
<dbReference type="NCBIfam" id="NF001371">
    <property type="entry name" value="PRK00278.1-3"/>
    <property type="match status" value="1"/>
</dbReference>
<dbReference type="NCBIfam" id="NF001377">
    <property type="entry name" value="PRK00278.2-4"/>
    <property type="match status" value="1"/>
</dbReference>
<dbReference type="PANTHER" id="PTHR22854:SF2">
    <property type="entry name" value="INDOLE-3-GLYCEROL-PHOSPHATE SYNTHASE"/>
    <property type="match status" value="1"/>
</dbReference>
<dbReference type="PANTHER" id="PTHR22854">
    <property type="entry name" value="TRYPTOPHAN BIOSYNTHESIS PROTEIN"/>
    <property type="match status" value="1"/>
</dbReference>
<dbReference type="Pfam" id="PF00218">
    <property type="entry name" value="IGPS"/>
    <property type="match status" value="1"/>
</dbReference>
<dbReference type="SUPFAM" id="SSF51366">
    <property type="entry name" value="Ribulose-phoshate binding barrel"/>
    <property type="match status" value="1"/>
</dbReference>
<dbReference type="PROSITE" id="PS00614">
    <property type="entry name" value="IGPS"/>
    <property type="match status" value="1"/>
</dbReference>
<organism>
    <name type="scientific">Listeria monocytogenes serotype 4b (strain F2365)</name>
    <dbReference type="NCBI Taxonomy" id="265669"/>
    <lineage>
        <taxon>Bacteria</taxon>
        <taxon>Bacillati</taxon>
        <taxon>Bacillota</taxon>
        <taxon>Bacilli</taxon>
        <taxon>Bacillales</taxon>
        <taxon>Listeriaceae</taxon>
        <taxon>Listeria</taxon>
    </lineage>
</organism>
<evidence type="ECO:0000255" key="1">
    <source>
        <dbReference type="HAMAP-Rule" id="MF_00134"/>
    </source>
</evidence>
<reference key="1">
    <citation type="journal article" date="2004" name="Nucleic Acids Res.">
        <title>Whole genome comparisons of serotype 4b and 1/2a strains of the food-borne pathogen Listeria monocytogenes reveal new insights into the core genome components of this species.</title>
        <authorList>
            <person name="Nelson K.E."/>
            <person name="Fouts D.E."/>
            <person name="Mongodin E.F."/>
            <person name="Ravel J."/>
            <person name="DeBoy R.T."/>
            <person name="Kolonay J.F."/>
            <person name="Rasko D.A."/>
            <person name="Angiuoli S.V."/>
            <person name="Gill S.R."/>
            <person name="Paulsen I.T."/>
            <person name="Peterson J.D."/>
            <person name="White O."/>
            <person name="Nelson W.C."/>
            <person name="Nierman W.C."/>
            <person name="Beanan M.J."/>
            <person name="Brinkac L.M."/>
            <person name="Daugherty S.C."/>
            <person name="Dodson R.J."/>
            <person name="Durkin A.S."/>
            <person name="Madupu R."/>
            <person name="Haft D.H."/>
            <person name="Selengut J."/>
            <person name="Van Aken S.E."/>
            <person name="Khouri H.M."/>
            <person name="Fedorova N."/>
            <person name="Forberger H.A."/>
            <person name="Tran B."/>
            <person name="Kathariou S."/>
            <person name="Wonderling L.D."/>
            <person name="Uhlich G.A."/>
            <person name="Bayles D.O."/>
            <person name="Luchansky J.B."/>
            <person name="Fraser C.M."/>
        </authorList>
    </citation>
    <scope>NUCLEOTIDE SEQUENCE [LARGE SCALE GENOMIC DNA]</scope>
    <source>
        <strain>F2365</strain>
    </source>
</reference>